<reference key="1">
    <citation type="submission" date="1999-01" db="EMBL/GenBank/DDBJ databases">
        <authorList>
            <person name="Kimura T."/>
            <person name="Ishida H."/>
        </authorList>
    </citation>
    <scope>NUCLEOTIDE SEQUENCE [MRNA] (ISOFORM 1)</scope>
    <source>
        <tissue>Brain</tissue>
    </source>
</reference>
<reference key="2">
    <citation type="journal article" date="2001" name="Genomics">
        <title>Human semaphorin 6b [(HSA)SEMA6B], a novel human class 6 semaphorin gene: alternative splicing and all-trans-retinoic acid-dependent downregulation in glioblastoma cell lines.</title>
        <authorList>
            <person name="Correa R.G."/>
            <person name="Sasahara R.M."/>
            <person name="Bengtson M.H."/>
            <person name="Katayama M.L.H."/>
            <person name="Salim A.C.M."/>
            <person name="Brentani M.M."/>
            <person name="Sogayar M.C."/>
            <person name="de Souza S.J."/>
            <person name="Simpson A.J.G."/>
        </authorList>
    </citation>
    <scope>NUCLEOTIDE SEQUENCE [MRNA] (ISOFORM 1)</scope>
</reference>
<reference key="3">
    <citation type="submission" date="2011-05" db="EMBL/GenBank/DDBJ databases">
        <title>Analysis of SEMA6B gene expression in breast cancer: identification of a new isoform.</title>
        <authorList>
            <person name="D'Apice L."/>
            <person name="Costa V."/>
            <person name="Caivano A."/>
            <person name="Trovato M."/>
            <person name="Pagani A."/>
            <person name="Manera S."/>
            <person name="Zambelli A."/>
            <person name="Ciccodicola A."/>
            <person name="De Berardinis P."/>
        </authorList>
    </citation>
    <scope>NUCLEOTIDE SEQUENCE [MRNA] (ISOFORM 2)</scope>
    <source>
        <tissue>Mammary cancer</tissue>
    </source>
</reference>
<reference key="4">
    <citation type="journal article" date="2003" name="Genome Res.">
        <title>The secreted protein discovery initiative (SPDI), a large-scale effort to identify novel human secreted and transmembrane proteins: a bioinformatics assessment.</title>
        <authorList>
            <person name="Clark H.F."/>
            <person name="Gurney A.L."/>
            <person name="Abaya E."/>
            <person name="Baker K."/>
            <person name="Baldwin D.T."/>
            <person name="Brush J."/>
            <person name="Chen J."/>
            <person name="Chow B."/>
            <person name="Chui C."/>
            <person name="Crowley C."/>
            <person name="Currell B."/>
            <person name="Deuel B."/>
            <person name="Dowd P."/>
            <person name="Eaton D."/>
            <person name="Foster J.S."/>
            <person name="Grimaldi C."/>
            <person name="Gu Q."/>
            <person name="Hass P.E."/>
            <person name="Heldens S."/>
            <person name="Huang A."/>
            <person name="Kim H.S."/>
            <person name="Klimowski L."/>
            <person name="Jin Y."/>
            <person name="Johnson S."/>
            <person name="Lee J."/>
            <person name="Lewis L."/>
            <person name="Liao D."/>
            <person name="Mark M.R."/>
            <person name="Robbie E."/>
            <person name="Sanchez C."/>
            <person name="Schoenfeld J."/>
            <person name="Seshagiri S."/>
            <person name="Simmons L."/>
            <person name="Singh J."/>
            <person name="Smith V."/>
            <person name="Stinson J."/>
            <person name="Vagts A."/>
            <person name="Vandlen R.L."/>
            <person name="Watanabe C."/>
            <person name="Wieand D."/>
            <person name="Woods K."/>
            <person name="Xie M.-H."/>
            <person name="Yansura D.G."/>
            <person name="Yi S."/>
            <person name="Yu G."/>
            <person name="Yuan J."/>
            <person name="Zhang M."/>
            <person name="Zhang Z."/>
            <person name="Goddard A.D."/>
            <person name="Wood W.I."/>
            <person name="Godowski P.J."/>
            <person name="Gray A.M."/>
        </authorList>
    </citation>
    <scope>NUCLEOTIDE SEQUENCE [LARGE SCALE MRNA] (ISOFORM 1)</scope>
</reference>
<reference key="5">
    <citation type="journal article" date="2004" name="Nature">
        <title>The DNA sequence and biology of human chromosome 19.</title>
        <authorList>
            <person name="Grimwood J."/>
            <person name="Gordon L.A."/>
            <person name="Olsen A.S."/>
            <person name="Terry A."/>
            <person name="Schmutz J."/>
            <person name="Lamerdin J.E."/>
            <person name="Hellsten U."/>
            <person name="Goodstein D."/>
            <person name="Couronne O."/>
            <person name="Tran-Gyamfi M."/>
            <person name="Aerts A."/>
            <person name="Altherr M."/>
            <person name="Ashworth L."/>
            <person name="Bajorek E."/>
            <person name="Black S."/>
            <person name="Branscomb E."/>
            <person name="Caenepeel S."/>
            <person name="Carrano A.V."/>
            <person name="Caoile C."/>
            <person name="Chan Y.M."/>
            <person name="Christensen M."/>
            <person name="Cleland C.A."/>
            <person name="Copeland A."/>
            <person name="Dalin E."/>
            <person name="Dehal P."/>
            <person name="Denys M."/>
            <person name="Detter J.C."/>
            <person name="Escobar J."/>
            <person name="Flowers D."/>
            <person name="Fotopulos D."/>
            <person name="Garcia C."/>
            <person name="Georgescu A.M."/>
            <person name="Glavina T."/>
            <person name="Gomez M."/>
            <person name="Gonzales E."/>
            <person name="Groza M."/>
            <person name="Hammon N."/>
            <person name="Hawkins T."/>
            <person name="Haydu L."/>
            <person name="Ho I."/>
            <person name="Huang W."/>
            <person name="Israni S."/>
            <person name="Jett J."/>
            <person name="Kadner K."/>
            <person name="Kimball H."/>
            <person name="Kobayashi A."/>
            <person name="Larionov V."/>
            <person name="Leem S.-H."/>
            <person name="Lopez F."/>
            <person name="Lou Y."/>
            <person name="Lowry S."/>
            <person name="Malfatti S."/>
            <person name="Martinez D."/>
            <person name="McCready P.M."/>
            <person name="Medina C."/>
            <person name="Morgan J."/>
            <person name="Nelson K."/>
            <person name="Nolan M."/>
            <person name="Ovcharenko I."/>
            <person name="Pitluck S."/>
            <person name="Pollard M."/>
            <person name="Popkie A.P."/>
            <person name="Predki P."/>
            <person name="Quan G."/>
            <person name="Ramirez L."/>
            <person name="Rash S."/>
            <person name="Retterer J."/>
            <person name="Rodriguez A."/>
            <person name="Rogers S."/>
            <person name="Salamov A."/>
            <person name="Salazar A."/>
            <person name="She X."/>
            <person name="Smith D."/>
            <person name="Slezak T."/>
            <person name="Solovyev V."/>
            <person name="Thayer N."/>
            <person name="Tice H."/>
            <person name="Tsai M."/>
            <person name="Ustaszewska A."/>
            <person name="Vo N."/>
            <person name="Wagner M."/>
            <person name="Wheeler J."/>
            <person name="Wu K."/>
            <person name="Xie G."/>
            <person name="Yang J."/>
            <person name="Dubchak I."/>
            <person name="Furey T.S."/>
            <person name="DeJong P."/>
            <person name="Dickson M."/>
            <person name="Gordon D."/>
            <person name="Eichler E.E."/>
            <person name="Pennacchio L.A."/>
            <person name="Richardson P."/>
            <person name="Stubbs L."/>
            <person name="Rokhsar D.S."/>
            <person name="Myers R.M."/>
            <person name="Rubin E.M."/>
            <person name="Lucas S.M."/>
        </authorList>
    </citation>
    <scope>NUCLEOTIDE SEQUENCE [LARGE SCALE GENOMIC DNA]</scope>
</reference>
<reference key="6">
    <citation type="submission" date="2005-09" db="EMBL/GenBank/DDBJ databases">
        <authorList>
            <person name="Mural R.J."/>
            <person name="Istrail S."/>
            <person name="Sutton G.G."/>
            <person name="Florea L."/>
            <person name="Halpern A.L."/>
            <person name="Mobarry C.M."/>
            <person name="Lippert R."/>
            <person name="Walenz B."/>
            <person name="Shatkay H."/>
            <person name="Dew I."/>
            <person name="Miller J.R."/>
            <person name="Flanigan M.J."/>
            <person name="Edwards N.J."/>
            <person name="Bolanos R."/>
            <person name="Fasulo D."/>
            <person name="Halldorsson B.V."/>
            <person name="Hannenhalli S."/>
            <person name="Turner R."/>
            <person name="Yooseph S."/>
            <person name="Lu F."/>
            <person name="Nusskern D.R."/>
            <person name="Shue B.C."/>
            <person name="Zheng X.H."/>
            <person name="Zhong F."/>
            <person name="Delcher A.L."/>
            <person name="Huson D.H."/>
            <person name="Kravitz S.A."/>
            <person name="Mouchard L."/>
            <person name="Reinert K."/>
            <person name="Remington K.A."/>
            <person name="Clark A.G."/>
            <person name="Waterman M.S."/>
            <person name="Eichler E.E."/>
            <person name="Adams M.D."/>
            <person name="Hunkapiller M.W."/>
            <person name="Myers E.W."/>
            <person name="Venter J.C."/>
        </authorList>
    </citation>
    <scope>NUCLEOTIDE SEQUENCE [LARGE SCALE GENOMIC DNA]</scope>
</reference>
<reference key="7">
    <citation type="journal article" date="2004" name="Genome Res.">
        <title>The status, quality, and expansion of the NIH full-length cDNA project: the Mammalian Gene Collection (MGC).</title>
        <authorList>
            <consortium name="The MGC Project Team"/>
        </authorList>
    </citation>
    <scope>NUCLEOTIDE SEQUENCE [LARGE SCALE MRNA] (ISOFORM 1)</scope>
</reference>
<reference key="8">
    <citation type="journal article" date="2004" name="Protein Sci.">
        <title>Signal peptide prediction based on analysis of experimentally verified cleavage sites.</title>
        <authorList>
            <person name="Zhang Z."/>
            <person name="Henzel W.J."/>
        </authorList>
    </citation>
    <scope>PROTEIN SEQUENCE OF 26-40</scope>
</reference>
<reference key="9">
    <citation type="journal article" date="2020" name="Am. J. Hum. Genet.">
        <title>De novo truncating variants in the last exon of SEMA6B Cause progressive myoclonic epilepsy.</title>
        <authorList>
            <person name="Hamanaka K."/>
            <person name="Imagawa E."/>
            <person name="Koshimizu E."/>
            <person name="Miyatake S."/>
            <person name="Tohyama J."/>
            <person name="Yamagata T."/>
            <person name="Miyauchi A."/>
            <person name="Ekhilevitch N."/>
            <person name="Nakamura F."/>
            <person name="Kawashima T."/>
            <person name="Goshima Y."/>
            <person name="Mohamed A.R."/>
            <person name="Ch'ng G.S."/>
            <person name="Fujita A."/>
            <person name="Azuma Y."/>
            <person name="Yasuda K."/>
            <person name="Imamura S."/>
            <person name="Nakashima M."/>
            <person name="Saitsu H."/>
            <person name="Mitsuhashi S."/>
            <person name="Mizuguchi T."/>
            <person name="Takata A."/>
            <person name="Miyake N."/>
            <person name="Matsumoto N."/>
        </authorList>
    </citation>
    <scope>INVOLVEMENT IN EPM11</scope>
    <scope>TISSUE SPECIFICITY</scope>
</reference>
<reference key="10">
    <citation type="journal article" date="2020" name="Cell Host Microbe">
        <title>Genome-wide CRISPR screen identifies semaphorin 6A and 6B as receptors for Paeniclostridium sordellii toxin TcsL.</title>
        <authorList>
            <person name="Tian S."/>
            <person name="Liu Y."/>
            <person name="Wu H."/>
            <person name="Liu H."/>
            <person name="Zeng J."/>
            <person name="Choi M.Y."/>
            <person name="Chen H."/>
            <person name="Gerhard R."/>
            <person name="Dong M."/>
        </authorList>
    </citation>
    <scope>INTERACTION WITH P.SORDELLII PROTEIN TCSL (MICROBIAL INFECTION)</scope>
    <scope>FUNCTION</scope>
    <scope>SUBCELLULAR LOCATION</scope>
</reference>
<reference key="11">
    <citation type="journal article" date="2020" name="Cell">
        <title>Recognition of semaphorin proteins by P. sordellii lethal toxin reveals principles of receptor specificity in clostridial toxins.</title>
        <authorList>
            <person name="Lee H."/>
            <person name="Beilhartz G.L."/>
            <person name="Kucharska I."/>
            <person name="Raman S."/>
            <person name="Cui H."/>
            <person name="Lam M.H.Y."/>
            <person name="Liang H."/>
            <person name="Rubinstein J.L."/>
            <person name="Schramek D."/>
            <person name="Julien J.P."/>
            <person name="Melnyk R.A."/>
            <person name="Taipale M."/>
        </authorList>
    </citation>
    <scope>INTERACTION WITH P.SORDELLII PROTEIN TCSL (MICROBIAL INFECTION)</scope>
    <scope>FUNCTION</scope>
</reference>
<accession>Q9H3T3</accession>
<accession>A5PKU4</accession>
<accession>F6IB19</accession>
<accession>Q9NRK9</accession>
<proteinExistence type="evidence at protein level"/>
<dbReference type="EMBL" id="AB022433">
    <property type="protein sequence ID" value="BAB20669.1"/>
    <property type="molecule type" value="mRNA"/>
</dbReference>
<dbReference type="EMBL" id="AF216389">
    <property type="protein sequence ID" value="AAF87661.1"/>
    <property type="status" value="ALT_SEQ"/>
    <property type="molecule type" value="mRNA"/>
</dbReference>
<dbReference type="EMBL" id="FR839673">
    <property type="protein sequence ID" value="CCA61013.1"/>
    <property type="molecule type" value="mRNA"/>
</dbReference>
<dbReference type="EMBL" id="AY358939">
    <property type="protein sequence ID" value="AAQ89298.1"/>
    <property type="molecule type" value="mRNA"/>
</dbReference>
<dbReference type="EMBL" id="AC011498">
    <property type="status" value="NOT_ANNOTATED_CDS"/>
    <property type="molecule type" value="Genomic_DNA"/>
</dbReference>
<dbReference type="EMBL" id="CH471139">
    <property type="protein sequence ID" value="EAW69208.1"/>
    <property type="molecule type" value="Genomic_DNA"/>
</dbReference>
<dbReference type="EMBL" id="BC142617">
    <property type="protein sequence ID" value="AAI42618.1"/>
    <property type="molecule type" value="mRNA"/>
</dbReference>
<dbReference type="CCDS" id="CCDS12131.1">
    <molecule id="Q9H3T3-1"/>
</dbReference>
<dbReference type="RefSeq" id="NP_115484.2">
    <molecule id="Q9H3T3-1"/>
    <property type="nucleotide sequence ID" value="NM_032108.3"/>
</dbReference>
<dbReference type="SMR" id="Q9H3T3"/>
<dbReference type="BioGRID" id="115763">
    <property type="interactions" value="74"/>
</dbReference>
<dbReference type="FunCoup" id="Q9H3T3">
    <property type="interactions" value="238"/>
</dbReference>
<dbReference type="IntAct" id="Q9H3T3">
    <property type="interactions" value="39"/>
</dbReference>
<dbReference type="STRING" id="9606.ENSP00000467290"/>
<dbReference type="GlyCosmos" id="Q9H3T3">
    <property type="glycosylation" value="7 sites, No reported glycans"/>
</dbReference>
<dbReference type="GlyGen" id="Q9H3T3">
    <property type="glycosylation" value="9 sites, 1 O-linked glycan (1 site)"/>
</dbReference>
<dbReference type="iPTMnet" id="Q9H3T3"/>
<dbReference type="PhosphoSitePlus" id="Q9H3T3"/>
<dbReference type="BioMuta" id="SEMA6B"/>
<dbReference type="DMDM" id="116242786"/>
<dbReference type="jPOST" id="Q9H3T3"/>
<dbReference type="MassIVE" id="Q9H3T3"/>
<dbReference type="PaxDb" id="9606-ENSP00000467290"/>
<dbReference type="PeptideAtlas" id="Q9H3T3"/>
<dbReference type="ProteomicsDB" id="80754">
    <molecule id="Q9H3T3-1"/>
</dbReference>
<dbReference type="Antibodypedia" id="57701">
    <property type="antibodies" value="113 antibodies from 22 providers"/>
</dbReference>
<dbReference type="DNASU" id="10501"/>
<dbReference type="Ensembl" id="ENST00000586582.6">
    <molecule id="Q9H3T3-1"/>
    <property type="protein sequence ID" value="ENSP00000467290.1"/>
    <property type="gene ID" value="ENSG00000167680.18"/>
</dbReference>
<dbReference type="Ensembl" id="ENST00000586965.1">
    <molecule id="Q9H3T3-3"/>
    <property type="protein sequence ID" value="ENSP00000465722.1"/>
    <property type="gene ID" value="ENSG00000167680.18"/>
</dbReference>
<dbReference type="Ensembl" id="ENST00000676793.2">
    <molecule id="Q9H3T3-1"/>
    <property type="protein sequence ID" value="ENSP00000503414.1"/>
    <property type="gene ID" value="ENSG00000167680.18"/>
</dbReference>
<dbReference type="GeneID" id="10501"/>
<dbReference type="KEGG" id="hsa:10501"/>
<dbReference type="MANE-Select" id="ENST00000586582.6">
    <property type="protein sequence ID" value="ENSP00000467290.1"/>
    <property type="RefSeq nucleotide sequence ID" value="NM_032108.4"/>
    <property type="RefSeq protein sequence ID" value="NP_115484.2"/>
</dbReference>
<dbReference type="UCSC" id="uc010dud.3">
    <molecule id="Q9H3T3-1"/>
    <property type="organism name" value="human"/>
</dbReference>
<dbReference type="AGR" id="HGNC:10739"/>
<dbReference type="CTD" id="10501"/>
<dbReference type="DisGeNET" id="10501"/>
<dbReference type="GeneCards" id="SEMA6B"/>
<dbReference type="HGNC" id="HGNC:10739">
    <property type="gene designation" value="SEMA6B"/>
</dbReference>
<dbReference type="HPA" id="ENSG00000167680">
    <property type="expression patterns" value="Tissue enhanced (brain)"/>
</dbReference>
<dbReference type="MalaCards" id="SEMA6B"/>
<dbReference type="MIM" id="608873">
    <property type="type" value="gene"/>
</dbReference>
<dbReference type="MIM" id="618876">
    <property type="type" value="phenotype"/>
</dbReference>
<dbReference type="neXtProt" id="NX_Q9H3T3"/>
<dbReference type="OpenTargets" id="ENSG00000167680"/>
<dbReference type="Orphanet" id="178469">
    <property type="disease" value="Autosomal dominant non-syndromic intellectual disability"/>
</dbReference>
<dbReference type="PharmGKB" id="PA35661"/>
<dbReference type="VEuPathDB" id="HostDB:ENSG00000167680"/>
<dbReference type="eggNOG" id="KOG3611">
    <property type="taxonomic scope" value="Eukaryota"/>
</dbReference>
<dbReference type="GeneTree" id="ENSGT00940000159170"/>
<dbReference type="HOGENOM" id="CLU_009051_2_1_1"/>
<dbReference type="InParanoid" id="Q9H3T3"/>
<dbReference type="OMA" id="DHMRGDH"/>
<dbReference type="OrthoDB" id="9481481at2759"/>
<dbReference type="PAN-GO" id="Q9H3T3">
    <property type="GO annotations" value="10 GO annotations based on evolutionary models"/>
</dbReference>
<dbReference type="PhylomeDB" id="Q9H3T3"/>
<dbReference type="TreeFam" id="TF316102"/>
<dbReference type="PathwayCommons" id="Q9H3T3"/>
<dbReference type="BioGRID-ORCS" id="10501">
    <property type="hits" value="63 hits in 1154 CRISPR screens"/>
</dbReference>
<dbReference type="ChiTaRS" id="SEMA6B">
    <property type="organism name" value="human"/>
</dbReference>
<dbReference type="GenomeRNAi" id="10501"/>
<dbReference type="Pharos" id="Q9H3T3">
    <property type="development level" value="Tbio"/>
</dbReference>
<dbReference type="PRO" id="PR:Q9H3T3"/>
<dbReference type="Proteomes" id="UP000005640">
    <property type="component" value="Chromosome 19"/>
</dbReference>
<dbReference type="RNAct" id="Q9H3T3">
    <property type="molecule type" value="protein"/>
</dbReference>
<dbReference type="Bgee" id="ENSG00000167680">
    <property type="expression patterns" value="Expressed in right frontal lobe and 110 other cell types or tissues"/>
</dbReference>
<dbReference type="GO" id="GO:0005886">
    <property type="term" value="C:plasma membrane"/>
    <property type="evidence" value="ECO:0000318"/>
    <property type="project" value="GO_Central"/>
</dbReference>
<dbReference type="GO" id="GO:0045499">
    <property type="term" value="F:chemorepellent activity"/>
    <property type="evidence" value="ECO:0000318"/>
    <property type="project" value="GO_Central"/>
</dbReference>
<dbReference type="GO" id="GO:0030215">
    <property type="term" value="F:semaphorin receptor binding"/>
    <property type="evidence" value="ECO:0000318"/>
    <property type="project" value="GO_Central"/>
</dbReference>
<dbReference type="GO" id="GO:0007411">
    <property type="term" value="P:axon guidance"/>
    <property type="evidence" value="ECO:0000250"/>
    <property type="project" value="UniProtKB"/>
</dbReference>
<dbReference type="GO" id="GO:0007417">
    <property type="term" value="P:central nervous system development"/>
    <property type="evidence" value="ECO:0000315"/>
    <property type="project" value="UniProtKB"/>
</dbReference>
<dbReference type="GO" id="GO:0021766">
    <property type="term" value="P:hippocampus development"/>
    <property type="evidence" value="ECO:0000250"/>
    <property type="project" value="UniProtKB"/>
</dbReference>
<dbReference type="GO" id="GO:0001755">
    <property type="term" value="P:neural crest cell migration"/>
    <property type="evidence" value="ECO:0000318"/>
    <property type="project" value="GO_Central"/>
</dbReference>
<dbReference type="GO" id="GO:0030335">
    <property type="term" value="P:positive regulation of cell migration"/>
    <property type="evidence" value="ECO:0000318"/>
    <property type="project" value="GO_Central"/>
</dbReference>
<dbReference type="GO" id="GO:0071526">
    <property type="term" value="P:semaphorin-plexin signaling pathway"/>
    <property type="evidence" value="ECO:0000318"/>
    <property type="project" value="GO_Central"/>
</dbReference>
<dbReference type="CDD" id="cd11267">
    <property type="entry name" value="Sema_6B"/>
    <property type="match status" value="1"/>
</dbReference>
<dbReference type="FunFam" id="3.30.1680.10:FF:000009">
    <property type="entry name" value="Semaphorin 6B isoform 3 variant"/>
    <property type="match status" value="1"/>
</dbReference>
<dbReference type="FunFam" id="2.130.10.10:FF:000028">
    <property type="entry name" value="semaphorin-6A isoform X1"/>
    <property type="match status" value="1"/>
</dbReference>
<dbReference type="Gene3D" id="3.30.1680.10">
    <property type="entry name" value="ligand-binding face of the semaphorins, domain 2"/>
    <property type="match status" value="1"/>
</dbReference>
<dbReference type="Gene3D" id="2.130.10.10">
    <property type="entry name" value="YVTN repeat-like/Quinoprotein amine dehydrogenase"/>
    <property type="match status" value="1"/>
</dbReference>
<dbReference type="InterPro" id="IPR002165">
    <property type="entry name" value="Plexin_repeat"/>
</dbReference>
<dbReference type="InterPro" id="IPR001627">
    <property type="entry name" value="Semap_dom"/>
</dbReference>
<dbReference type="InterPro" id="IPR036352">
    <property type="entry name" value="Semap_dom_sf"/>
</dbReference>
<dbReference type="InterPro" id="IPR027231">
    <property type="entry name" value="Semaphorin"/>
</dbReference>
<dbReference type="InterPro" id="IPR015943">
    <property type="entry name" value="WD40/YVTN_repeat-like_dom_sf"/>
</dbReference>
<dbReference type="PANTHER" id="PTHR11036">
    <property type="entry name" value="SEMAPHORIN"/>
    <property type="match status" value="1"/>
</dbReference>
<dbReference type="PANTHER" id="PTHR11036:SF10">
    <property type="entry name" value="SEMAPHORIN-6B"/>
    <property type="match status" value="1"/>
</dbReference>
<dbReference type="Pfam" id="PF01437">
    <property type="entry name" value="PSI"/>
    <property type="match status" value="1"/>
</dbReference>
<dbReference type="Pfam" id="PF01403">
    <property type="entry name" value="Sema"/>
    <property type="match status" value="1"/>
</dbReference>
<dbReference type="SMART" id="SM00630">
    <property type="entry name" value="Sema"/>
    <property type="match status" value="1"/>
</dbReference>
<dbReference type="SUPFAM" id="SSF103575">
    <property type="entry name" value="Plexin repeat"/>
    <property type="match status" value="1"/>
</dbReference>
<dbReference type="SUPFAM" id="SSF101912">
    <property type="entry name" value="Sema domain"/>
    <property type="match status" value="1"/>
</dbReference>
<dbReference type="PROSITE" id="PS51004">
    <property type="entry name" value="SEMA"/>
    <property type="match status" value="1"/>
</dbReference>
<sequence>MQTPRASPPRPALLLLLLLLGGAHGLFPEEPPPLSVAPRDYLNHYPVFVGSGPGRLTPAEGADDLNIQRVLRVNRTLFIGDRDNLYRVELEPPTSTELRYQRKLTWRSNPSDINVCRMKGKQEGECRNFVKVLLLRDESTLFVCGSNAFNPVCANYSIDTLQPVGDNISGMARCPYDPKHANVALFSDGMLFTATVTDFLAIDAVIYRSLGDRPTLRTVKHDSKWFKEPYFVHAVEWGSHVYFFFREIAMEFNYLEKVVVSRVARVCKNDVGGSPRVLEKQWTSFLKARLNCSVPGDSHFYFNVLQAVTGVVSLGGRPVVLAVFSTPSNSIPGSAVCAFDLTQVAAVFEGRFREQKSPESIWTPVPEDQVPRPRPGCCAAPGMQYNASSALPDDILNFVKTHPLMDEAVPSLGHAPWILRTLMRHQLTRVAVDVGAGPWGNQTVVFLGSEAGTVLKFLVRPNASTSGTSGLSVFLEEFETYRPDRCGRPGGGETGQRLLSLELDAASGGLLAAFPRCVVRVPVARCQQYSGCMKNCIGSQDPYCGWAPDGSCIFLSPGTRAAFEQDVSGASTSGLGDCTGLLRASLSEDRAGLVSVNLLVTSSVAAFVVGAVVSGFSVGWFVGLRERRELARRKDKEAILAHGAGEAVLSVSRLGERRAQGPGGRGGGGGGGAGVPPEALLAPLMQNGWAKATLLQGGPHDLDSGLLPTPEQTPLPQKRLPTPHPHPHALGPRAWDHGHPLLPASASSSLLLLAPARAPEQPPAPGEPTPDGRLYAARPGRASHGDFPLTPHASPDRRRVVSAPTGPLDPASAADGLPRPWSPPPTGSLRRPLGPHAPPAATLRRTHTFNSGEARPGDRHRGCHARPGTDLAHLLPYGGADRTAPPVP</sequence>
<gene>
    <name type="primary">SEMA6B</name>
    <name type="synonym">SEMAN</name>
    <name type="synonym">SEMAZ</name>
    <name type="ORF">UNQ1907/PRO4353</name>
</gene>
<comment type="function">
    <text evidence="1">Functions as a cell surface repellent for mossy fibers of developing neurons in the hippocampus where it plays a role in axon guidance. May function through the PLXNA4 receptor expressed by mossy cell axons.</text>
</comment>
<comment type="function">
    <text evidence="7 8">(Microbial infection) Acts as a receptor for P.sordellii toxin TcsL in the in the vascular endothelium.</text>
</comment>
<comment type="subunit">
    <text evidence="7 8">(Microbial infection) Interacts with P.sordellii toxin TcsL; semaphorins SEMA6A and SEMA6B constitute the major host receptors for TcsL in the vascular endothelium.</text>
</comment>
<comment type="subcellular location">
    <subcellularLocation>
        <location evidence="7">Cell membrane</location>
        <topology evidence="2">Single-pass type I membrane protein</topology>
    </subcellularLocation>
</comment>
<comment type="alternative products">
    <event type="alternative splicing"/>
    <isoform>
        <id>Q9H3T3-1</id>
        <name>1</name>
        <sequence type="displayed"/>
    </isoform>
    <isoform>
        <id>Q9H3T3-3</id>
        <name>2</name>
        <sequence type="described" ref="VSP_047625 VSP_047626"/>
    </isoform>
</comment>
<comment type="tissue specificity">
    <text evidence="6">Expressed in the brain in GABAergic neurons.</text>
</comment>
<comment type="disease" evidence="6">
    <disease id="DI-05834">
        <name>Epilepsy, progressive myoclonic 11</name>
        <acronym>EPM11</acronym>
        <description>A form of progressive myoclonic epilepsy, a clinically and genetically heterogeneous group of disorders defined by the combination of action and reflex myoclonus, other types of epileptic seizures, and progressive neurodegeneration and neurocognitive impairment. EPM11 is an autosomal dominant form. Clinical features include normal or mildly delayed early development, developmental regression after seizures onset, inability to walk, severely impaired intellectual development, poor or absent speech, spasticity, ataxia, and intention tremor. Brain imaging shows cerebellar atrophy in some patients.</description>
        <dbReference type="MIM" id="618876"/>
    </disease>
    <text>The disease is caused by variants affecting the gene represented in this entry.</text>
</comment>
<comment type="similarity">
    <text evidence="10">Belongs to the semaphorin family.</text>
</comment>
<comment type="sequence caution" evidence="10">
    <conflict type="miscellaneous discrepancy">
        <sequence resource="EMBL-CDS" id="AAF87661"/>
    </conflict>
    <text>Aberrant splicing.</text>
</comment>
<keyword id="KW-0025">Alternative splicing</keyword>
<keyword id="KW-1003">Cell membrane</keyword>
<keyword id="KW-0217">Developmental protein</keyword>
<keyword id="KW-0221">Differentiation</keyword>
<keyword id="KW-0903">Direct protein sequencing</keyword>
<keyword id="KW-1015">Disulfide bond</keyword>
<keyword id="KW-0887">Epilepsy</keyword>
<keyword id="KW-0325">Glycoprotein</keyword>
<keyword id="KW-0472">Membrane</keyword>
<keyword id="KW-0488">Methylation</keyword>
<keyword id="KW-0523">Neurodegeneration</keyword>
<keyword id="KW-0524">Neurogenesis</keyword>
<keyword id="KW-1267">Proteomics identification</keyword>
<keyword id="KW-1185">Reference proteome</keyword>
<keyword id="KW-0732">Signal</keyword>
<keyword id="KW-0812">Transmembrane</keyword>
<keyword id="KW-1133">Transmembrane helix</keyword>
<protein>
    <recommendedName>
        <fullName>Semaphorin-6B</fullName>
    </recommendedName>
    <alternativeName>
        <fullName>Semaphorin-Z</fullName>
        <shortName>Sema Z</shortName>
    </alternativeName>
</protein>
<feature type="signal peptide" evidence="5">
    <location>
        <begin position="1"/>
        <end position="25"/>
    </location>
</feature>
<feature type="chain" id="PRO_0000032341" description="Semaphorin-6B">
    <location>
        <begin position="26"/>
        <end position="888"/>
    </location>
</feature>
<feature type="topological domain" description="Extracellular" evidence="2">
    <location>
        <begin position="26"/>
        <end position="603"/>
    </location>
</feature>
<feature type="transmembrane region" description="Helical" evidence="2">
    <location>
        <begin position="604"/>
        <end position="624"/>
    </location>
</feature>
<feature type="topological domain" description="Cytoplasmic" evidence="2">
    <location>
        <begin position="625"/>
        <end position="888"/>
    </location>
</feature>
<feature type="domain" description="Sema" evidence="3">
    <location>
        <begin position="31"/>
        <end position="523"/>
    </location>
</feature>
<feature type="region of interest" description="Disordered" evidence="4">
    <location>
        <begin position="651"/>
        <end position="679"/>
    </location>
</feature>
<feature type="region of interest" description="Disordered" evidence="4">
    <location>
        <begin position="695"/>
        <end position="742"/>
    </location>
</feature>
<feature type="region of interest" description="Disordered" evidence="4">
    <location>
        <begin position="757"/>
        <end position="888"/>
    </location>
</feature>
<feature type="compositionally biased region" description="Gly residues" evidence="4">
    <location>
        <begin position="661"/>
        <end position="674"/>
    </location>
</feature>
<feature type="compositionally biased region" description="Low complexity" evidence="4">
    <location>
        <begin position="706"/>
        <end position="717"/>
    </location>
</feature>
<feature type="modified residue" description="Omega-N-methylarginine" evidence="1">
    <location>
        <position position="665"/>
    </location>
</feature>
<feature type="glycosylation site" description="N-linked (GlcNAc...) asparagine" evidence="2">
    <location>
        <position position="74"/>
    </location>
</feature>
<feature type="glycosylation site" description="N-linked (GlcNAc...) asparagine" evidence="2">
    <location>
        <position position="155"/>
    </location>
</feature>
<feature type="glycosylation site" description="N-linked (GlcNAc...) asparagine" evidence="2">
    <location>
        <position position="167"/>
    </location>
</feature>
<feature type="glycosylation site" description="N-linked (GlcNAc...) asparagine" evidence="2">
    <location>
        <position position="291"/>
    </location>
</feature>
<feature type="glycosylation site" description="N-linked (GlcNAc...) asparagine" evidence="2">
    <location>
        <position position="386"/>
    </location>
</feature>
<feature type="glycosylation site" description="N-linked (GlcNAc...) asparagine" evidence="2">
    <location>
        <position position="441"/>
    </location>
</feature>
<feature type="glycosylation site" description="N-linked (GlcNAc...) asparagine" evidence="2">
    <location>
        <position position="462"/>
    </location>
</feature>
<feature type="disulfide bond" evidence="3">
    <location>
        <begin position="116"/>
        <end position="126"/>
    </location>
</feature>
<feature type="disulfide bond" evidence="3">
    <location>
        <begin position="144"/>
        <end position="153"/>
    </location>
</feature>
<feature type="disulfide bond" evidence="3">
    <location>
        <begin position="267"/>
        <end position="378"/>
    </location>
</feature>
<feature type="disulfide bond" evidence="3">
    <location>
        <begin position="292"/>
        <end position="337"/>
    </location>
</feature>
<feature type="disulfide bond" evidence="3">
    <location>
        <begin position="486"/>
        <end position="517"/>
    </location>
</feature>
<feature type="disulfide bond" evidence="3">
    <location>
        <begin position="526"/>
        <end position="544"/>
    </location>
</feature>
<feature type="disulfide bond" evidence="3">
    <location>
        <begin position="532"/>
        <end position="578"/>
    </location>
</feature>
<feature type="disulfide bond" evidence="3">
    <location>
        <begin position="536"/>
        <end position="552"/>
    </location>
</feature>
<feature type="splice variant" id="VSP_047625" description="In isoform 2." evidence="9">
    <original>WFVGLRERRELARRKDKEAILAHGAGEAVLSVSRLGERRAQGPGGRGGGGGGGAGVPP</original>
    <variation>VCVRASEGCCGRVCQVGHACRVCVHERRSWWPQRPGRWLSRRWGFQKARGSPRCRLGV</variation>
    <location>
        <begin position="620"/>
        <end position="677"/>
    </location>
</feature>
<feature type="splice variant" id="VSP_047626" description="In isoform 2." evidence="9">
    <location>
        <begin position="678"/>
        <end position="888"/>
    </location>
</feature>
<feature type="sequence conflict" description="In Ref. 1; BAB20669." evidence="10" ref="1">
    <original>E</original>
    <variation>D</variation>
    <location>
        <position position="30"/>
    </location>
</feature>
<organism>
    <name type="scientific">Homo sapiens</name>
    <name type="common">Human</name>
    <dbReference type="NCBI Taxonomy" id="9606"/>
    <lineage>
        <taxon>Eukaryota</taxon>
        <taxon>Metazoa</taxon>
        <taxon>Chordata</taxon>
        <taxon>Craniata</taxon>
        <taxon>Vertebrata</taxon>
        <taxon>Euteleostomi</taxon>
        <taxon>Mammalia</taxon>
        <taxon>Eutheria</taxon>
        <taxon>Euarchontoglires</taxon>
        <taxon>Primates</taxon>
        <taxon>Haplorrhini</taxon>
        <taxon>Catarrhini</taxon>
        <taxon>Hominidae</taxon>
        <taxon>Homo</taxon>
    </lineage>
</organism>
<name>SEM6B_HUMAN</name>
<evidence type="ECO:0000250" key="1">
    <source>
        <dbReference type="UniProtKB" id="O54951"/>
    </source>
</evidence>
<evidence type="ECO:0000255" key="2"/>
<evidence type="ECO:0000255" key="3">
    <source>
        <dbReference type="PROSITE-ProRule" id="PRU00352"/>
    </source>
</evidence>
<evidence type="ECO:0000256" key="4">
    <source>
        <dbReference type="SAM" id="MobiDB-lite"/>
    </source>
</evidence>
<evidence type="ECO:0000269" key="5">
    <source>
    </source>
</evidence>
<evidence type="ECO:0000269" key="6">
    <source>
    </source>
</evidence>
<evidence type="ECO:0000269" key="7">
    <source>
    </source>
</evidence>
<evidence type="ECO:0000269" key="8">
    <source>
    </source>
</evidence>
<evidence type="ECO:0000303" key="9">
    <source ref="3"/>
</evidence>
<evidence type="ECO:0000305" key="10"/>